<keyword id="KW-0007">Acetylation</keyword>
<keyword id="KW-0106">Calcium</keyword>
<keyword id="KW-0963">Cytoplasm</keyword>
<keyword id="KW-0206">Cytoskeleton</keyword>
<keyword id="KW-0903">Direct protein sequencing</keyword>
<keyword id="KW-0479">Metal-binding</keyword>
<keyword id="KW-0505">Motor protein</keyword>
<keyword id="KW-0514">Muscle protein</keyword>
<keyword id="KW-0518">Myosin</keyword>
<keyword id="KW-0597">Phosphoprotein</keyword>
<keyword id="KW-1185">Reference proteome</keyword>
<keyword id="KW-0677">Repeat</keyword>
<sequence length="172" mass="19827">MSSKRAKAKTTKKRPQRATSNVFAMFDQSQIQEFKEAFNMIDQNRDGFIDKEDLHDMLASLGKNPTDEYLEGMMSEAPGPINFTMFLTMFGEKLNGTDPEDVIRNAFACFDEEASGFIHEDHLRELLTTMGDRFTDEEVDEMYREAPIDKKGNFNYVEFTRILKHGAKDKDD</sequence>
<organism>
    <name type="scientific">Sus scrofa</name>
    <name type="common">Pig</name>
    <dbReference type="NCBI Taxonomy" id="9823"/>
    <lineage>
        <taxon>Eukaryota</taxon>
        <taxon>Metazoa</taxon>
        <taxon>Chordata</taxon>
        <taxon>Craniata</taxon>
        <taxon>Vertebrata</taxon>
        <taxon>Euteleostomi</taxon>
        <taxon>Mammalia</taxon>
        <taxon>Eutheria</taxon>
        <taxon>Laurasiatheria</taxon>
        <taxon>Artiodactyla</taxon>
        <taxon>Suina</taxon>
        <taxon>Suidae</taxon>
        <taxon>Sus</taxon>
    </lineage>
</organism>
<feature type="initiator methionine" description="Removed" evidence="6">
    <location>
        <position position="1"/>
    </location>
</feature>
<feature type="chain" id="PRO_0000198737" description="Myosin regulatory light polypeptide 9">
    <location>
        <begin position="2"/>
        <end position="172"/>
    </location>
</feature>
<feature type="domain" description="EF-hand 1" evidence="4">
    <location>
        <begin position="29"/>
        <end position="64"/>
    </location>
</feature>
<feature type="domain" description="EF-hand 2" evidence="4">
    <location>
        <begin position="98"/>
        <end position="133"/>
    </location>
</feature>
<feature type="domain" description="EF-hand 3" evidence="4">
    <location>
        <begin position="134"/>
        <end position="169"/>
    </location>
</feature>
<feature type="region of interest" description="Disordered" evidence="5">
    <location>
        <begin position="1"/>
        <end position="20"/>
    </location>
</feature>
<feature type="compositionally biased region" description="Basic residues" evidence="5">
    <location>
        <begin position="1"/>
        <end position="16"/>
    </location>
</feature>
<feature type="binding site" evidence="4">
    <location>
        <position position="42"/>
    </location>
    <ligand>
        <name>Ca(2+)</name>
        <dbReference type="ChEBI" id="CHEBI:29108"/>
    </ligand>
</feature>
<feature type="binding site" evidence="4">
    <location>
        <position position="44"/>
    </location>
    <ligand>
        <name>Ca(2+)</name>
        <dbReference type="ChEBI" id="CHEBI:29108"/>
    </ligand>
</feature>
<feature type="binding site" evidence="4">
    <location>
        <position position="46"/>
    </location>
    <ligand>
        <name>Ca(2+)</name>
        <dbReference type="ChEBI" id="CHEBI:29108"/>
    </ligand>
</feature>
<feature type="binding site" evidence="4">
    <location>
        <position position="53"/>
    </location>
    <ligand>
        <name>Ca(2+)</name>
        <dbReference type="ChEBI" id="CHEBI:29108"/>
    </ligand>
</feature>
<feature type="modified residue" description="N-acetylserine" evidence="6">
    <location>
        <position position="2"/>
    </location>
</feature>
<feature type="modified residue" description="Phosphothreonine; by MLCK, CIT and ROCK2" evidence="2">
    <location>
        <position position="19"/>
    </location>
</feature>
<feature type="modified residue" description="Phosphoserine; by CDC42BP, CIT, MLCK, PAK1, ROCK1, ROCK2, DAPK1, DAPK2 and ZIPK/DAPK3" evidence="2">
    <location>
        <position position="20"/>
    </location>
</feature>
<reference key="1">
    <citation type="journal article" date="1992" name="J. Biochem.">
        <title>Amino acid sequence of the 20-kDa regulatory light chain of porcine aorta media smooth muscle myosin.</title>
        <authorList>
            <person name="Watanabe M."/>
            <person name="Hasegawa Y."/>
            <person name="Katoh T."/>
            <person name="Morita F."/>
        </authorList>
    </citation>
    <scope>PROTEIN SEQUENCE</scope>
    <scope>TISSUE SPECIFICITY</scope>
    <scope>ACETYLATION AT SER-2</scope>
    <source>
        <tissue>Aorta</tissue>
    </source>
</reference>
<accession>P29269</accession>
<dbReference type="PIR" id="JX0232">
    <property type="entry name" value="JX0232"/>
</dbReference>
<dbReference type="RefSeq" id="NP_001231401.1">
    <property type="nucleotide sequence ID" value="NM_001244472.1"/>
</dbReference>
<dbReference type="SMR" id="P29269"/>
<dbReference type="FunCoup" id="P29269">
    <property type="interactions" value="961"/>
</dbReference>
<dbReference type="STRING" id="9823.ENSSSCP00000072536"/>
<dbReference type="iPTMnet" id="P29269"/>
<dbReference type="PaxDb" id="9823-ENSSSCP00000026757"/>
<dbReference type="PeptideAtlas" id="P29269"/>
<dbReference type="Ensembl" id="ENSSSCT00000038183.3">
    <property type="protein sequence ID" value="ENSSSCP00000039784.1"/>
    <property type="gene ID" value="ENSSSCG00000036402.3"/>
</dbReference>
<dbReference type="Ensembl" id="ENSSSCT00015087839.1">
    <property type="protein sequence ID" value="ENSSSCP00015035811.1"/>
    <property type="gene ID" value="ENSSSCG00015065383.1"/>
</dbReference>
<dbReference type="Ensembl" id="ENSSSCT00025035917.1">
    <property type="protein sequence ID" value="ENSSSCP00025014999.1"/>
    <property type="gene ID" value="ENSSSCG00025026472.1"/>
</dbReference>
<dbReference type="Ensembl" id="ENSSSCT00030048806.1">
    <property type="protein sequence ID" value="ENSSSCP00030022051.1"/>
    <property type="gene ID" value="ENSSSCG00030035177.1"/>
</dbReference>
<dbReference type="Ensembl" id="ENSSSCT00040067901.1">
    <property type="protein sequence ID" value="ENSSSCP00040028855.1"/>
    <property type="gene ID" value="ENSSSCG00040050327.1"/>
</dbReference>
<dbReference type="Ensembl" id="ENSSSCT00045013997.1">
    <property type="protein sequence ID" value="ENSSSCP00045009684.1"/>
    <property type="gene ID" value="ENSSSCG00045008329.1"/>
</dbReference>
<dbReference type="Ensembl" id="ENSSSCT00050083928.1">
    <property type="protein sequence ID" value="ENSSSCP00050036018.1"/>
    <property type="gene ID" value="ENSSSCG00050061604.1"/>
</dbReference>
<dbReference type="Ensembl" id="ENSSSCT00055057826.1">
    <property type="protein sequence ID" value="ENSSSCP00055046274.1"/>
    <property type="gene ID" value="ENSSSCG00055029127.1"/>
</dbReference>
<dbReference type="Ensembl" id="ENSSSCT00060105423.1">
    <property type="protein sequence ID" value="ENSSSCP00060046331.1"/>
    <property type="gene ID" value="ENSSSCG00060076756.1"/>
</dbReference>
<dbReference type="Ensembl" id="ENSSSCT00065090066.1">
    <property type="protein sequence ID" value="ENSSSCP00065039398.1"/>
    <property type="gene ID" value="ENSSSCG00065065581.1"/>
</dbReference>
<dbReference type="Ensembl" id="ENSSSCT00090013214">
    <property type="protein sequence ID" value="ENSSSCP00090008442"/>
    <property type="gene ID" value="ENSSSCG00090007432"/>
</dbReference>
<dbReference type="Ensembl" id="ENSSSCT00105037170">
    <property type="protein sequence ID" value="ENSSSCP00105025800"/>
    <property type="gene ID" value="ENSSSCG00105019403"/>
</dbReference>
<dbReference type="Ensembl" id="ENSSSCT00110025788">
    <property type="protein sequence ID" value="ENSSSCP00110017241"/>
    <property type="gene ID" value="ENSSSCG00110013527"/>
</dbReference>
<dbReference type="Ensembl" id="ENSSSCT00115019671">
    <property type="protein sequence ID" value="ENSSSCP00115018609"/>
    <property type="gene ID" value="ENSSSCG00115011393"/>
</dbReference>
<dbReference type="Ensembl" id="ENSSSCT00130040514">
    <property type="protein sequence ID" value="ENSSSCP00130028550"/>
    <property type="gene ID" value="ENSSSCG00130020883"/>
</dbReference>
<dbReference type="GeneID" id="100157760"/>
<dbReference type="KEGG" id="ssc:100157760"/>
<dbReference type="CTD" id="10398"/>
<dbReference type="VGNC" id="VGNC:95651">
    <property type="gene designation" value="MYL9"/>
</dbReference>
<dbReference type="eggNOG" id="KOG0031">
    <property type="taxonomic scope" value="Eukaryota"/>
</dbReference>
<dbReference type="GeneTree" id="ENSGT00940000155458"/>
<dbReference type="HOGENOM" id="CLU_061288_9_3_1"/>
<dbReference type="InParanoid" id="P29269"/>
<dbReference type="OMA" id="GVNFTMF"/>
<dbReference type="OrthoDB" id="429467at2759"/>
<dbReference type="TreeFam" id="TF314218"/>
<dbReference type="Reactome" id="R-SSC-445355">
    <property type="pathway name" value="Smooth Muscle Contraction"/>
</dbReference>
<dbReference type="Reactome" id="R-SSC-5627123">
    <property type="pathway name" value="RHO GTPases activate PAKs"/>
</dbReference>
<dbReference type="Proteomes" id="UP000008227">
    <property type="component" value="Chromosome 17"/>
</dbReference>
<dbReference type="Proteomes" id="UP000314985">
    <property type="component" value="Unplaced"/>
</dbReference>
<dbReference type="Proteomes" id="UP000694570">
    <property type="component" value="Unplaced"/>
</dbReference>
<dbReference type="Proteomes" id="UP000694571">
    <property type="component" value="Unplaced"/>
</dbReference>
<dbReference type="Proteomes" id="UP000694720">
    <property type="component" value="Unplaced"/>
</dbReference>
<dbReference type="Proteomes" id="UP000694722">
    <property type="component" value="Unplaced"/>
</dbReference>
<dbReference type="Proteomes" id="UP000694723">
    <property type="component" value="Unplaced"/>
</dbReference>
<dbReference type="Proteomes" id="UP000694724">
    <property type="component" value="Unplaced"/>
</dbReference>
<dbReference type="Proteomes" id="UP000694725">
    <property type="component" value="Unplaced"/>
</dbReference>
<dbReference type="Proteomes" id="UP000694726">
    <property type="component" value="Unplaced"/>
</dbReference>
<dbReference type="Proteomes" id="UP000694727">
    <property type="component" value="Unplaced"/>
</dbReference>
<dbReference type="Proteomes" id="UP000694728">
    <property type="component" value="Unplaced"/>
</dbReference>
<dbReference type="Bgee" id="ENSSSCG00000036402">
    <property type="expression patterns" value="Expressed in stomach and 39 other cell types or tissues"/>
</dbReference>
<dbReference type="ExpressionAtlas" id="P29269">
    <property type="expression patterns" value="baseline and differential"/>
</dbReference>
<dbReference type="GO" id="GO:0005938">
    <property type="term" value="C:cell cortex"/>
    <property type="evidence" value="ECO:0007669"/>
    <property type="project" value="UniProtKB-SubCell"/>
</dbReference>
<dbReference type="GO" id="GO:0005737">
    <property type="term" value="C:cytoplasm"/>
    <property type="evidence" value="ECO:0000318"/>
    <property type="project" value="GO_Central"/>
</dbReference>
<dbReference type="GO" id="GO:0030016">
    <property type="term" value="C:myofibril"/>
    <property type="evidence" value="ECO:0000318"/>
    <property type="project" value="GO_Central"/>
</dbReference>
<dbReference type="GO" id="GO:0016460">
    <property type="term" value="C:myosin II complex"/>
    <property type="evidence" value="ECO:0000318"/>
    <property type="project" value="GO_Central"/>
</dbReference>
<dbReference type="GO" id="GO:0001725">
    <property type="term" value="C:stress fiber"/>
    <property type="evidence" value="ECO:0000318"/>
    <property type="project" value="GO_Central"/>
</dbReference>
<dbReference type="GO" id="GO:0005509">
    <property type="term" value="F:calcium ion binding"/>
    <property type="evidence" value="ECO:0007669"/>
    <property type="project" value="InterPro"/>
</dbReference>
<dbReference type="GO" id="GO:0032036">
    <property type="term" value="F:myosin heavy chain binding"/>
    <property type="evidence" value="ECO:0000318"/>
    <property type="project" value="GO_Central"/>
</dbReference>
<dbReference type="GO" id="GO:0030239">
    <property type="term" value="P:myofibril assembly"/>
    <property type="evidence" value="ECO:0000318"/>
    <property type="project" value="GO_Central"/>
</dbReference>
<dbReference type="CDD" id="cd00051">
    <property type="entry name" value="EFh"/>
    <property type="match status" value="1"/>
</dbReference>
<dbReference type="FunFam" id="1.10.238.10:FF:000010">
    <property type="entry name" value="Myosin regulatory light chain 2, atrial isoform"/>
    <property type="match status" value="1"/>
</dbReference>
<dbReference type="FunFam" id="1.10.238.10:FF:000007">
    <property type="entry name" value="Putative myosin regulatory light chain sqh"/>
    <property type="match status" value="1"/>
</dbReference>
<dbReference type="Gene3D" id="1.10.238.10">
    <property type="entry name" value="EF-hand"/>
    <property type="match status" value="2"/>
</dbReference>
<dbReference type="InterPro" id="IPR011992">
    <property type="entry name" value="EF-hand-dom_pair"/>
</dbReference>
<dbReference type="InterPro" id="IPR018247">
    <property type="entry name" value="EF_Hand_1_Ca_BS"/>
</dbReference>
<dbReference type="InterPro" id="IPR002048">
    <property type="entry name" value="EF_hand_dom"/>
</dbReference>
<dbReference type="InterPro" id="IPR050403">
    <property type="entry name" value="Myosin_RLC"/>
</dbReference>
<dbReference type="PANTHER" id="PTHR23049">
    <property type="entry name" value="MYOSIN REGULATORY LIGHT CHAIN 2"/>
    <property type="match status" value="1"/>
</dbReference>
<dbReference type="Pfam" id="PF13499">
    <property type="entry name" value="EF-hand_7"/>
    <property type="match status" value="2"/>
</dbReference>
<dbReference type="SMART" id="SM00054">
    <property type="entry name" value="EFh"/>
    <property type="match status" value="2"/>
</dbReference>
<dbReference type="SUPFAM" id="SSF47473">
    <property type="entry name" value="EF-hand"/>
    <property type="match status" value="1"/>
</dbReference>
<dbReference type="PROSITE" id="PS00018">
    <property type="entry name" value="EF_HAND_1"/>
    <property type="match status" value="1"/>
</dbReference>
<dbReference type="PROSITE" id="PS50222">
    <property type="entry name" value="EF_HAND_2"/>
    <property type="match status" value="3"/>
</dbReference>
<comment type="function">
    <text evidence="2 3">Myosin regulatory subunit that plays an important role in regulation of both smooth muscle and nonmuscle cell contractile activity via its phosphorylation. Implicated in cytokinesis, receptor capping, and cell locomotion (By similarity). In myoblasts, may regulate PIEZO1-dependent cortical actomyosin assembly involved in myotube formation (By similarity).</text>
</comment>
<comment type="subunit">
    <text evidence="2 3">Myosin is a hexamer of 2 heavy chains and 4 light chains: interacts with myosin heavy chain MYO19 (By similarity). Interacts with LUZP1; the interaction results in inhibition of phosphorylation of MYL9 by DAPK3 (By similarity).</text>
</comment>
<comment type="subcellular location">
    <subcellularLocation>
        <location evidence="3">Cytoplasm</location>
        <location evidence="3">Cytoskeleton</location>
    </subcellularLocation>
    <subcellularLocation>
        <location evidence="3">Cytoplasm</location>
        <location evidence="3">Cell cortex</location>
    </subcellularLocation>
    <text evidence="3">Colocalizes with F-actin, MYH9 and PIEZO1 at the actomyosin cortex in myoblasts.</text>
</comment>
<comment type="tissue specificity">
    <text evidence="6">Smooth muscle tissues and in some, but not all, nonmuscle cells.</text>
</comment>
<comment type="PTM">
    <text evidence="1 2">Phosphorylation increases the actin-activated myosin ATPase activity and thereby regulates the contractile activity. It is required to generate the driving force in the migration of the cells but not necessary for localization of myosin-2 at the leading edge. Phosphorylation is required for myotube formation. Phosphorylated by DAPK3; DAPK3-mediated phosphorylation is inhibited by LUZP1.</text>
</comment>
<comment type="miscellaneous">
    <text>This chain binds calcium.</text>
</comment>
<proteinExistence type="evidence at protein level"/>
<protein>
    <recommendedName>
        <fullName>Myosin regulatory light polypeptide 9</fullName>
    </recommendedName>
    <alternativeName>
        <fullName>20 kDa myosin light chain</fullName>
        <shortName>LC20</shortName>
    </alternativeName>
    <alternativeName>
        <fullName>Myosin regulatory light chain 2, smooth muscle isoform</fullName>
    </alternativeName>
    <alternativeName>
        <fullName>Myosin regulatory light chain 9</fullName>
    </alternativeName>
</protein>
<gene>
    <name type="primary">MYL9</name>
    <name type="synonym">MYRL2</name>
</gene>
<name>MYL9_PIG</name>
<evidence type="ECO:0000250" key="1">
    <source>
        <dbReference type="UniProtKB" id="P02612"/>
    </source>
</evidence>
<evidence type="ECO:0000250" key="2">
    <source>
        <dbReference type="UniProtKB" id="P24844"/>
    </source>
</evidence>
<evidence type="ECO:0000250" key="3">
    <source>
        <dbReference type="UniProtKB" id="Q9CQ19"/>
    </source>
</evidence>
<evidence type="ECO:0000255" key="4">
    <source>
        <dbReference type="PROSITE-ProRule" id="PRU00448"/>
    </source>
</evidence>
<evidence type="ECO:0000256" key="5">
    <source>
        <dbReference type="SAM" id="MobiDB-lite"/>
    </source>
</evidence>
<evidence type="ECO:0000269" key="6">
    <source>
    </source>
</evidence>